<name>MAFG_MOUSE</name>
<accession>O54790</accession>
<evidence type="ECO:0000250" key="1">
    <source>
        <dbReference type="UniProtKB" id="O15525"/>
    </source>
</evidence>
<evidence type="ECO:0000250" key="2">
    <source>
        <dbReference type="UniProtKB" id="Q76MX4"/>
    </source>
</evidence>
<evidence type="ECO:0000255" key="3">
    <source>
        <dbReference type="PROSITE-ProRule" id="PRU00978"/>
    </source>
</evidence>
<evidence type="ECO:0000256" key="4">
    <source>
        <dbReference type="SAM" id="MobiDB-lite"/>
    </source>
</evidence>
<evidence type="ECO:0000269" key="5">
    <source>
    </source>
</evidence>
<evidence type="ECO:0000269" key="6">
    <source>
    </source>
</evidence>
<evidence type="ECO:0000269" key="7">
    <source>
    </source>
</evidence>
<evidence type="ECO:0000305" key="8"/>
<evidence type="ECO:0007829" key="9">
    <source>
        <dbReference type="PDB" id="3A5T"/>
    </source>
</evidence>
<reference key="1">
    <citation type="journal article" date="1998" name="Genes Dev.">
        <title>Impaired megakaryopoiesis and behavioral defects in mafG-null mutant mice.</title>
        <authorList>
            <person name="Shavit J.A."/>
            <person name="Motohashi H."/>
            <person name="Onodera K."/>
            <person name="Akasaka J."/>
            <person name="Yamamoto M."/>
            <person name="Engel J.D."/>
        </authorList>
    </citation>
    <scope>NUCLEOTIDE SEQUENCE [GENOMIC DNA]</scope>
    <scope>DISRUPTION PHENOTYPE</scope>
    <scope>DEVELOPMENTAL STAGE</scope>
    <scope>FUNCTION</scope>
    <source>
        <strain>129/SvJ</strain>
    </source>
</reference>
<reference key="2">
    <citation type="journal article" date="2004" name="Genome Res.">
        <title>The status, quality, and expansion of the NIH full-length cDNA project: the Mammalian Gene Collection (MGC).</title>
        <authorList>
            <consortium name="The MGC Project Team"/>
        </authorList>
    </citation>
    <scope>NUCLEOTIDE SEQUENCE [LARGE SCALE MRNA]</scope>
    <source>
        <strain>C57BL/6J</strain>
        <tissue>Mammary gland</tissue>
        <tissue>Olfactory epithelium</tissue>
    </source>
</reference>
<reference key="3">
    <citation type="journal article" date="2006" name="Mol. Cell. Biol.">
        <title>MafG sumoylation is required for active transcriptional repression.</title>
        <authorList>
            <person name="Motohashi H."/>
            <person name="Katsuoka F."/>
            <person name="Miyoshi C."/>
            <person name="Uchimura Y."/>
            <person name="Saitoh H."/>
            <person name="Francastel C."/>
            <person name="Engel J.D."/>
            <person name="Yamamoto M."/>
        </authorList>
    </citation>
    <scope>SUMOYLATION AT LYS-14</scope>
    <scope>FUNCTION</scope>
</reference>
<reference key="4">
    <citation type="journal article" date="2019" name="Cell">
        <title>The oncogenic action of NRF2 depends on de-glycation by fructosamine-3-kinase.</title>
        <authorList>
            <person name="Sanghvi V.R."/>
            <person name="Leibold J."/>
            <person name="Mina M."/>
            <person name="Mohan P."/>
            <person name="Berishaj M."/>
            <person name="Li Z."/>
            <person name="Miele M.M."/>
            <person name="Lailler N."/>
            <person name="Zhao C."/>
            <person name="de Stanchina E."/>
            <person name="Viale A."/>
            <person name="Akkari L."/>
            <person name="Lowe S.W."/>
            <person name="Ciriello G."/>
            <person name="Hendrickson R.C."/>
            <person name="Wendel H.G."/>
        </authorList>
    </citation>
    <scope>INTERACTION WITH NFE2L2</scope>
</reference>
<reference key="5">
    <citation type="journal article" date="2002" name="Nat. Struct. Biol.">
        <title>Solution structure of the DNA-binding domain of MafG.</title>
        <authorList>
            <person name="Kusunoki H."/>
            <person name="Motohashi H."/>
            <person name="Katsuoka F."/>
            <person name="Morohashi A."/>
            <person name="Yamamoto M."/>
            <person name="Tanaka T."/>
        </authorList>
    </citation>
    <scope>STRUCTURE BY NMR OF 24-64</scope>
</reference>
<dbReference type="EMBL" id="AB009693">
    <property type="protein sequence ID" value="BAA24028.1"/>
    <property type="molecule type" value="Genomic_DNA"/>
</dbReference>
<dbReference type="EMBL" id="BC002092">
    <property type="protein sequence ID" value="AAH02092.1"/>
    <property type="molecule type" value="mRNA"/>
</dbReference>
<dbReference type="EMBL" id="BC052633">
    <property type="protein sequence ID" value="AAH52633.1"/>
    <property type="molecule type" value="mRNA"/>
</dbReference>
<dbReference type="CCDS" id="CCDS25748.1"/>
<dbReference type="RefSeq" id="NP_034886.1">
    <property type="nucleotide sequence ID" value="NM_010756.3"/>
</dbReference>
<dbReference type="RefSeq" id="XP_017169797.1">
    <property type="nucleotide sequence ID" value="XM_017314308.3"/>
</dbReference>
<dbReference type="RefSeq" id="XP_017169798.1">
    <property type="nucleotide sequence ID" value="XM_017314309.2"/>
</dbReference>
<dbReference type="RefSeq" id="XP_017169799.1">
    <property type="nucleotide sequence ID" value="XM_017314310.1"/>
</dbReference>
<dbReference type="RefSeq" id="XP_017169800.1">
    <property type="nucleotide sequence ID" value="XM_017314311.3"/>
</dbReference>
<dbReference type="RefSeq" id="XP_030101486.1">
    <property type="nucleotide sequence ID" value="XM_030245626.2"/>
</dbReference>
<dbReference type="RefSeq" id="XP_030101487.1">
    <property type="nucleotide sequence ID" value="XM_030245627.2"/>
</dbReference>
<dbReference type="RefSeq" id="XP_036012266.1">
    <property type="nucleotide sequence ID" value="XM_036156373.1"/>
</dbReference>
<dbReference type="PDB" id="1K1V">
    <property type="method" value="NMR"/>
    <property type="chains" value="A=24-64"/>
</dbReference>
<dbReference type="PDB" id="3A5T">
    <property type="method" value="X-ray"/>
    <property type="resolution" value="2.80 A"/>
    <property type="chains" value="A/B=21-123"/>
</dbReference>
<dbReference type="PDBsum" id="1K1V"/>
<dbReference type="PDBsum" id="3A5T"/>
<dbReference type="SMR" id="O54790"/>
<dbReference type="BioGRID" id="201283">
    <property type="interactions" value="4"/>
</dbReference>
<dbReference type="DIP" id="DIP-46344N"/>
<dbReference type="FunCoup" id="O54790">
    <property type="interactions" value="1241"/>
</dbReference>
<dbReference type="IntAct" id="O54790">
    <property type="interactions" value="3"/>
</dbReference>
<dbReference type="STRING" id="10090.ENSMUSP00000053899"/>
<dbReference type="iPTMnet" id="O54790"/>
<dbReference type="PhosphoSitePlus" id="O54790"/>
<dbReference type="PaxDb" id="10090-ENSMUSP00000053899"/>
<dbReference type="PeptideAtlas" id="O54790"/>
<dbReference type="ProteomicsDB" id="292162"/>
<dbReference type="Pumba" id="O54790"/>
<dbReference type="Antibodypedia" id="19851">
    <property type="antibodies" value="129 antibodies from 27 providers"/>
</dbReference>
<dbReference type="DNASU" id="17134"/>
<dbReference type="Ensembl" id="ENSMUST00000058162.14">
    <property type="protein sequence ID" value="ENSMUSP00000053899.8"/>
    <property type="gene ID" value="ENSMUSG00000051510.14"/>
</dbReference>
<dbReference type="Ensembl" id="ENSMUST00000106180.2">
    <property type="protein sequence ID" value="ENSMUSP00000101786.2"/>
    <property type="gene ID" value="ENSMUSG00000051510.14"/>
</dbReference>
<dbReference type="Ensembl" id="ENSMUST00000106181.8">
    <property type="protein sequence ID" value="ENSMUSP00000101787.2"/>
    <property type="gene ID" value="ENSMUSG00000051510.14"/>
</dbReference>
<dbReference type="Ensembl" id="ENSMUST00000106182.8">
    <property type="protein sequence ID" value="ENSMUSP00000101788.2"/>
    <property type="gene ID" value="ENSMUSG00000051510.14"/>
</dbReference>
<dbReference type="GeneID" id="17134"/>
<dbReference type="KEGG" id="mmu:17134"/>
<dbReference type="UCSC" id="uc007mtu.2">
    <property type="organism name" value="mouse"/>
</dbReference>
<dbReference type="AGR" id="MGI:96911"/>
<dbReference type="CTD" id="4097"/>
<dbReference type="MGI" id="MGI:96911">
    <property type="gene designation" value="Mafg"/>
</dbReference>
<dbReference type="VEuPathDB" id="HostDB:ENSMUSG00000051510"/>
<dbReference type="eggNOG" id="KOG4196">
    <property type="taxonomic scope" value="Eukaryota"/>
</dbReference>
<dbReference type="GeneTree" id="ENSGT00940000160070"/>
<dbReference type="HOGENOM" id="CLU_112948_0_0_1"/>
<dbReference type="InParanoid" id="O54790"/>
<dbReference type="OMA" id="QHSRYRF"/>
<dbReference type="OrthoDB" id="5974330at2759"/>
<dbReference type="PhylomeDB" id="O54790"/>
<dbReference type="TreeFam" id="TF325689"/>
<dbReference type="Reactome" id="R-MMU-983231">
    <property type="pathway name" value="Factors involved in megakaryocyte development and platelet production"/>
</dbReference>
<dbReference type="BioGRID-ORCS" id="17134">
    <property type="hits" value="2 hits in 78 CRISPR screens"/>
</dbReference>
<dbReference type="ChiTaRS" id="Mafg">
    <property type="organism name" value="mouse"/>
</dbReference>
<dbReference type="EvolutionaryTrace" id="O54790"/>
<dbReference type="PRO" id="PR:O54790"/>
<dbReference type="Proteomes" id="UP000000589">
    <property type="component" value="Chromosome 11"/>
</dbReference>
<dbReference type="RNAct" id="O54790">
    <property type="molecule type" value="protein"/>
</dbReference>
<dbReference type="Bgee" id="ENSMUSG00000051510">
    <property type="expression patterns" value="Expressed in granulocyte and 282 other cell types or tissues"/>
</dbReference>
<dbReference type="GO" id="GO:0090575">
    <property type="term" value="C:RNA polymerase II transcription regulator complex"/>
    <property type="evidence" value="ECO:0007669"/>
    <property type="project" value="Ensembl"/>
</dbReference>
<dbReference type="GO" id="GO:0005667">
    <property type="term" value="C:transcription regulator complex"/>
    <property type="evidence" value="ECO:0000304"/>
    <property type="project" value="ParkinsonsUK-UCL"/>
</dbReference>
<dbReference type="GO" id="GO:0003677">
    <property type="term" value="F:DNA binding"/>
    <property type="evidence" value="ECO:0000314"/>
    <property type="project" value="MGI"/>
</dbReference>
<dbReference type="GO" id="GO:0001228">
    <property type="term" value="F:DNA-binding transcription activator activity, RNA polymerase II-specific"/>
    <property type="evidence" value="ECO:0000314"/>
    <property type="project" value="NTNU_SB"/>
</dbReference>
<dbReference type="GO" id="GO:0042802">
    <property type="term" value="F:identical protein binding"/>
    <property type="evidence" value="ECO:0007669"/>
    <property type="project" value="Ensembl"/>
</dbReference>
<dbReference type="GO" id="GO:0000978">
    <property type="term" value="F:RNA polymerase II cis-regulatory region sequence-specific DNA binding"/>
    <property type="evidence" value="ECO:0000314"/>
    <property type="project" value="NTNU_SB"/>
</dbReference>
<dbReference type="GO" id="GO:0030534">
    <property type="term" value="P:adult behavior"/>
    <property type="evidence" value="ECO:0000315"/>
    <property type="project" value="MGI"/>
</dbReference>
<dbReference type="GO" id="GO:0001701">
    <property type="term" value="P:in utero embryonic development"/>
    <property type="evidence" value="ECO:0000316"/>
    <property type="project" value="MGI"/>
</dbReference>
<dbReference type="GO" id="GO:0010628">
    <property type="term" value="P:positive regulation of gene expression"/>
    <property type="evidence" value="ECO:0000316"/>
    <property type="project" value="ParkinsonsUK-UCL"/>
</dbReference>
<dbReference type="GO" id="GO:0045944">
    <property type="term" value="P:positive regulation of transcription by RNA polymerase II"/>
    <property type="evidence" value="ECO:0000314"/>
    <property type="project" value="NTNU_SB"/>
</dbReference>
<dbReference type="GO" id="GO:0042127">
    <property type="term" value="P:regulation of cell population proliferation"/>
    <property type="evidence" value="ECO:0000315"/>
    <property type="project" value="MGI"/>
</dbReference>
<dbReference type="GO" id="GO:0045604">
    <property type="term" value="P:regulation of epidermal cell differentiation"/>
    <property type="evidence" value="ECO:0000316"/>
    <property type="project" value="MGI"/>
</dbReference>
<dbReference type="CDD" id="cd14717">
    <property type="entry name" value="bZIP_Maf_small"/>
    <property type="match status" value="1"/>
</dbReference>
<dbReference type="FunFam" id="1.20.5.170:FF:000011">
    <property type="entry name" value="Transcription factor MafG, putative"/>
    <property type="match status" value="1"/>
</dbReference>
<dbReference type="Gene3D" id="1.20.5.170">
    <property type="match status" value="1"/>
</dbReference>
<dbReference type="InterPro" id="IPR004827">
    <property type="entry name" value="bZIP"/>
</dbReference>
<dbReference type="InterPro" id="IPR004826">
    <property type="entry name" value="bZIP_Maf"/>
</dbReference>
<dbReference type="InterPro" id="IPR046347">
    <property type="entry name" value="bZIP_sf"/>
</dbReference>
<dbReference type="InterPro" id="IPR008917">
    <property type="entry name" value="TF_DNA-bd_sf"/>
</dbReference>
<dbReference type="InterPro" id="IPR024874">
    <property type="entry name" value="Transcription_factor_Maf_fam"/>
</dbReference>
<dbReference type="PANTHER" id="PTHR10129">
    <property type="entry name" value="TRANSCRIPTION FACTOR MAF"/>
    <property type="match status" value="1"/>
</dbReference>
<dbReference type="PANTHER" id="PTHR10129:SF15">
    <property type="entry name" value="TRANSCRIPTION FACTOR MAFG"/>
    <property type="match status" value="1"/>
</dbReference>
<dbReference type="Pfam" id="PF03131">
    <property type="entry name" value="bZIP_Maf"/>
    <property type="match status" value="1"/>
</dbReference>
<dbReference type="SMART" id="SM00338">
    <property type="entry name" value="BRLZ"/>
    <property type="match status" value="1"/>
</dbReference>
<dbReference type="SUPFAM" id="SSF47454">
    <property type="entry name" value="A DNA-binding domain in eukaryotic transcription factors"/>
    <property type="match status" value="1"/>
</dbReference>
<dbReference type="SUPFAM" id="SSF57959">
    <property type="entry name" value="Leucine zipper domain"/>
    <property type="match status" value="1"/>
</dbReference>
<dbReference type="PROSITE" id="PS50217">
    <property type="entry name" value="BZIP"/>
    <property type="match status" value="1"/>
</dbReference>
<keyword id="KW-0002">3D-structure</keyword>
<keyword id="KW-0007">Acetylation</keyword>
<keyword id="KW-0238">DNA-binding</keyword>
<keyword id="KW-1017">Isopeptide bond</keyword>
<keyword id="KW-0539">Nucleus</keyword>
<keyword id="KW-0597">Phosphoprotein</keyword>
<keyword id="KW-1185">Reference proteome</keyword>
<keyword id="KW-0678">Repressor</keyword>
<keyword id="KW-0804">Transcription</keyword>
<keyword id="KW-0805">Transcription regulation</keyword>
<keyword id="KW-0832">Ubl conjugation</keyword>
<feature type="chain" id="PRO_0000076501" description="Transcription factor MafG">
    <location>
        <begin position="1"/>
        <end position="162"/>
    </location>
</feature>
<feature type="domain" description="bZIP" evidence="3">
    <location>
        <begin position="51"/>
        <end position="114"/>
    </location>
</feature>
<feature type="region of interest" description="Disordered" evidence="4">
    <location>
        <begin position="1"/>
        <end position="24"/>
    </location>
</feature>
<feature type="region of interest" description="Basic motif" evidence="3">
    <location>
        <begin position="53"/>
        <end position="76"/>
    </location>
</feature>
<feature type="region of interest" description="Leucine-zipper" evidence="3">
    <location>
        <begin position="79"/>
        <end position="93"/>
    </location>
</feature>
<feature type="modified residue" description="N6-acetyllysine" evidence="1">
    <location>
        <position position="53"/>
    </location>
</feature>
<feature type="modified residue" description="N6-acetyllysine" evidence="1">
    <location>
        <position position="60"/>
    </location>
</feature>
<feature type="modified residue" description="N6-acetyllysine" evidence="1">
    <location>
        <position position="71"/>
    </location>
</feature>
<feature type="modified residue" description="N6-acetyllysine" evidence="1">
    <location>
        <position position="76"/>
    </location>
</feature>
<feature type="modified residue" description="Phosphoserine" evidence="1">
    <location>
        <position position="124"/>
    </location>
</feature>
<feature type="cross-link" description="Glycyl lysine isopeptide (Lys-Gly) (interchain with G-Cter in SUMO); alternate" evidence="5">
    <location>
        <position position="14"/>
    </location>
</feature>
<feature type="cross-link" description="Glycyl lysine isopeptide (Lys-Gly) (interchain with G-Cter in SUMO2); alternate" evidence="1">
    <location>
        <position position="14"/>
    </location>
</feature>
<feature type="helix" evidence="9">
    <location>
        <begin position="26"/>
        <end position="31"/>
    </location>
</feature>
<feature type="helix" evidence="9">
    <location>
        <begin position="34"/>
        <end position="39"/>
    </location>
</feature>
<feature type="turn" evidence="9">
    <location>
        <begin position="40"/>
        <end position="43"/>
    </location>
</feature>
<feature type="helix" evidence="9">
    <location>
        <begin position="46"/>
        <end position="83"/>
    </location>
</feature>
<feature type="turn" evidence="9">
    <location>
        <begin position="84"/>
        <end position="86"/>
    </location>
</feature>
<feature type="turn" evidence="9">
    <location>
        <begin position="89"/>
        <end position="94"/>
    </location>
</feature>
<feature type="helix" evidence="9">
    <location>
        <begin position="99"/>
        <end position="102"/>
    </location>
</feature>
<feature type="turn" evidence="9">
    <location>
        <begin position="103"/>
        <end position="105"/>
    </location>
</feature>
<feature type="strand" evidence="9">
    <location>
        <begin position="106"/>
        <end position="109"/>
    </location>
</feature>
<gene>
    <name type="primary">Mafg</name>
</gene>
<organism>
    <name type="scientific">Mus musculus</name>
    <name type="common">Mouse</name>
    <dbReference type="NCBI Taxonomy" id="10090"/>
    <lineage>
        <taxon>Eukaryota</taxon>
        <taxon>Metazoa</taxon>
        <taxon>Chordata</taxon>
        <taxon>Craniata</taxon>
        <taxon>Vertebrata</taxon>
        <taxon>Euteleostomi</taxon>
        <taxon>Mammalia</taxon>
        <taxon>Eutheria</taxon>
        <taxon>Euarchontoglires</taxon>
        <taxon>Glires</taxon>
        <taxon>Rodentia</taxon>
        <taxon>Myomorpha</taxon>
        <taxon>Muroidea</taxon>
        <taxon>Muridae</taxon>
        <taxon>Murinae</taxon>
        <taxon>Mus</taxon>
        <taxon>Mus</taxon>
    </lineage>
</organism>
<comment type="function">
    <text evidence="1 2">Since they lack a putative transactivation domain, the small Mafs behave as transcriptional repressors when they dimerize among themselves (PubMed:16738329, PubMed:9679061). However, they seem to serve as transcriptional activators by dimerizing with other (usually larger) basic-zipper proteins, such as NFE2, NFE2L1 and NFE2L2, and recruiting them to specific DNA-binding sites (PubMed:16738329, PubMed:9679061). Small Maf proteins heterodimerize with Fos and may act as competitive repressors of the NFE2L2 transcription factor. Transcription factor, component of erythroid-specific transcription factor NFE2L2. Activates globin gene expression when associated with NFE2L2 (By similarity). May be involved in signal transduction of extracellular H(+) (By similarity).</text>
</comment>
<comment type="subunit">
    <text evidence="1 6">Homodimer or heterodimer (By similarity). Homodimerization leads to transcriptional repression (By similarity). Forms high affinity heterodimers with members of the CNC-bZIP family such as NFE2, NFE2L1/NRF1, NFE2L2/NRF2 and NFE2L3/NRF3 (PubMed:31398338). Interacts with CREBBP; the interaction leads to acetylation of the basic region of MAFG and stimulation of NFE2 transcriptional activity through increased DNA binding (By similarity).</text>
</comment>
<comment type="subcellular location">
    <subcellularLocation>
        <location evidence="1 3">Nucleus</location>
    </subcellularLocation>
</comment>
<comment type="developmental stage">
    <text evidence="7">Expressed throughout the embryo up until 8.5 dpc with strong expression in the neural tube. Expression continues throughout the embryo with some intense expression also in the epithelium of the intestine, skeletal muscle, lens, retina, cranial nerve, and dorsal root ganglion cells. After birth, strong expression in the epidermis, hair follicles, epithelium of the digestive and respiratory tracts, and kidney tubules.</text>
</comment>
<comment type="PTM">
    <text evidence="5">Sumoylation at Lys-14 is required for active transcriptional repression.</text>
</comment>
<comment type="PTM">
    <text evidence="1">Acetylated in erythroid cells by CREB-binding protein (CBP). Acetylation augments the DNA-binding activity of NFE2, but has no effect on binding NFE2.</text>
</comment>
<comment type="disruption phenotype">
    <text evidence="7">Mice, although viable and fertile, exhibit abnormal megakaryocyte proliferation as well as age-dependent behavioral defects. Megakaryocytes display both anti-glycoprotein IIb immunoreactivity and anti-acetylcholinesterase activity.</text>
</comment>
<comment type="similarity">
    <text evidence="8">Belongs to the bZIP family. Maf subfamily.</text>
</comment>
<protein>
    <recommendedName>
        <fullName>Transcription factor MafG</fullName>
    </recommendedName>
    <alternativeName>
        <fullName>V-maf musculoaponeurotic fibrosarcoma oncogene homolog G</fullName>
    </alternativeName>
</protein>
<sequence>MTTPNKGNKALKVKREPGENGTSLTDEELVTMSVRELNQHLRGLSKEEIIQLKQRRRTLKNRGYAASCRVKRVTQKEELEKQKAELQQEVEKLASENASMKLELDALRSKYEALQNFARTVARSPVAPARGPLAAGLGPLVPGKVAATSVITIVKSKTDARS</sequence>
<proteinExistence type="evidence at protein level"/>